<keyword id="KW-0119">Carbohydrate metabolism</keyword>
<keyword id="KW-0963">Cytoplasm</keyword>
<keyword id="KW-0378">Hydrolase</keyword>
<keyword id="KW-0479">Metal-binding</keyword>
<keyword id="KW-0862">Zinc</keyword>
<accession>A0KYQ5</accession>
<reference key="1">
    <citation type="submission" date="2006-09" db="EMBL/GenBank/DDBJ databases">
        <title>Complete sequence of chromosome 1 of Shewanella sp. ANA-3.</title>
        <authorList>
            <person name="Copeland A."/>
            <person name="Lucas S."/>
            <person name="Lapidus A."/>
            <person name="Barry K."/>
            <person name="Detter J.C."/>
            <person name="Glavina del Rio T."/>
            <person name="Hammon N."/>
            <person name="Israni S."/>
            <person name="Dalin E."/>
            <person name="Tice H."/>
            <person name="Pitluck S."/>
            <person name="Chertkov O."/>
            <person name="Brettin T."/>
            <person name="Bruce D."/>
            <person name="Han C."/>
            <person name="Tapia R."/>
            <person name="Gilna P."/>
            <person name="Schmutz J."/>
            <person name="Larimer F."/>
            <person name="Land M."/>
            <person name="Hauser L."/>
            <person name="Kyrpides N."/>
            <person name="Kim E."/>
            <person name="Newman D."/>
            <person name="Salticov C."/>
            <person name="Konstantinidis K."/>
            <person name="Klappenback J."/>
            <person name="Tiedje J."/>
            <person name="Richardson P."/>
        </authorList>
    </citation>
    <scope>NUCLEOTIDE SEQUENCE [LARGE SCALE GENOMIC DNA]</scope>
    <source>
        <strain>ANA-3</strain>
    </source>
</reference>
<reference key="2">
    <citation type="journal article" date="2012" name="J. Biol. Chem.">
        <title>N-acetylgalactosamine utilization pathway and regulon in proteobacteria: genomic reconstruction and experimental characterization in Shewanella.</title>
        <authorList>
            <person name="Leyn S.A."/>
            <person name="Gao F."/>
            <person name="Yang C."/>
            <person name="Rodionov D.A."/>
        </authorList>
    </citation>
    <scope>FUNCTION</scope>
    <scope>CATALYTIC ACTIVITY</scope>
    <scope>SUBSTRATE SPECIFICITY</scope>
    <source>
        <strain>ANA-3</strain>
    </source>
</reference>
<feature type="chain" id="PRO_0000433129" description="N-acetylgalactosamine-6-phosphate deacetylase">
    <location>
        <begin position="1"/>
        <end position="394"/>
    </location>
</feature>
<feature type="active site" description="Proton donor/acceptor" evidence="1">
    <location>
        <position position="280"/>
    </location>
</feature>
<feature type="binding site" evidence="1">
    <location>
        <position position="137"/>
    </location>
    <ligand>
        <name>Zn(2+)</name>
        <dbReference type="ChEBI" id="CHEBI:29105"/>
    </ligand>
</feature>
<feature type="binding site" evidence="1">
    <location>
        <begin position="148"/>
        <end position="149"/>
    </location>
    <ligand>
        <name>substrate</name>
    </ligand>
</feature>
<feature type="binding site" evidence="1">
    <location>
        <position position="201"/>
    </location>
    <ligand>
        <name>Zn(2+)</name>
        <dbReference type="ChEBI" id="CHEBI:29105"/>
    </ligand>
</feature>
<feature type="binding site" evidence="1">
    <location>
        <position position="222"/>
    </location>
    <ligand>
        <name>Zn(2+)</name>
        <dbReference type="ChEBI" id="CHEBI:29105"/>
    </ligand>
</feature>
<feature type="binding site" evidence="1">
    <location>
        <begin position="225"/>
        <end position="226"/>
    </location>
    <ligand>
        <name>substrate</name>
    </ligand>
</feature>
<feature type="binding site" evidence="1">
    <location>
        <position position="233"/>
    </location>
    <ligand>
        <name>substrate</name>
    </ligand>
</feature>
<feature type="binding site" evidence="1">
    <location>
        <begin position="254"/>
        <end position="257"/>
    </location>
    <ligand>
        <name>substrate</name>
    </ligand>
</feature>
<feature type="binding site" evidence="1">
    <location>
        <begin position="313"/>
        <end position="315"/>
    </location>
    <ligand>
        <name>substrate</name>
    </ligand>
</feature>
<sequence length="394" mass="42410">MKPNTDFMLIADGAKVLTQGNLTEHCAIEVSDGIICGLKSTISAEWTADKPHYRLTSGTLVAGFIDTQVNGGGGLMFNHVPTLETLRLMMQAHRQFGTTAMLPTVITDDIEVMQAAADAVAEAIDCQVPGIIGIHFEGPHLSVAKRGCHPPAHLRGITEREWLLYLRQDLGVRLITLAPESVTPEQIKRLVASGAIISLGHSNADGETVLKAIEAGASGFTHLYNGMSALTSREPGMVGAAFASENTYCGIILDGQHVHPISALAAWRAKGTEHLMLVTDAMSPLGSDQTEFQFFDGKVVREGMTLRDQHGSLAGSVLDMASAVRYAATELNLGLSNAVQMATRTPAEFIQRPQLGDIAEGKQADWVWLDDDQRVLAVWIAGELLYQAEQARFA</sequence>
<name>AGAA2_SHESA</name>
<gene>
    <name evidence="3" type="primary">agaAII</name>
    <name type="ordered locus">Shewana3_2697</name>
</gene>
<dbReference type="EC" id="3.5.1.-" evidence="2"/>
<dbReference type="EC" id="3.5.1.25" evidence="2"/>
<dbReference type="EMBL" id="CP000469">
    <property type="protein sequence ID" value="ABK48924.1"/>
    <property type="molecule type" value="Genomic_DNA"/>
</dbReference>
<dbReference type="RefSeq" id="WP_011717581.1">
    <property type="nucleotide sequence ID" value="NC_008577.1"/>
</dbReference>
<dbReference type="SMR" id="A0KYQ5"/>
<dbReference type="STRING" id="94122.Shewana3_2697"/>
<dbReference type="KEGG" id="shn:Shewana3_2697"/>
<dbReference type="eggNOG" id="COG1820">
    <property type="taxonomic scope" value="Bacteria"/>
</dbReference>
<dbReference type="HOGENOM" id="CLU_032482_2_2_6"/>
<dbReference type="OrthoDB" id="9776488at2"/>
<dbReference type="BioCyc" id="MetaCyc:MONOMER-17511"/>
<dbReference type="Proteomes" id="UP000002589">
    <property type="component" value="Chromosome"/>
</dbReference>
<dbReference type="GO" id="GO:0005737">
    <property type="term" value="C:cytoplasm"/>
    <property type="evidence" value="ECO:0007669"/>
    <property type="project" value="UniProtKB-SubCell"/>
</dbReference>
<dbReference type="GO" id="GO:0046872">
    <property type="term" value="F:metal ion binding"/>
    <property type="evidence" value="ECO:0007669"/>
    <property type="project" value="UniProtKB-KW"/>
</dbReference>
<dbReference type="GO" id="GO:0047419">
    <property type="term" value="F:N-acetylgalactosamine-6-phosphate deacetylase activity"/>
    <property type="evidence" value="ECO:0007669"/>
    <property type="project" value="RHEA"/>
</dbReference>
<dbReference type="GO" id="GO:0008448">
    <property type="term" value="F:N-acetylglucosamine-6-phosphate deacetylase activity"/>
    <property type="evidence" value="ECO:0000314"/>
    <property type="project" value="UniProtKB"/>
</dbReference>
<dbReference type="GO" id="GO:0006046">
    <property type="term" value="P:N-acetylglucosamine catabolic process"/>
    <property type="evidence" value="ECO:0007669"/>
    <property type="project" value="TreeGrafter"/>
</dbReference>
<dbReference type="GO" id="GO:0006044">
    <property type="term" value="P:N-acetylglucosamine metabolic process"/>
    <property type="evidence" value="ECO:0000314"/>
    <property type="project" value="UniProtKB"/>
</dbReference>
<dbReference type="CDD" id="cd00854">
    <property type="entry name" value="NagA"/>
    <property type="match status" value="1"/>
</dbReference>
<dbReference type="FunFam" id="3.20.20.140:FF:000004">
    <property type="entry name" value="N-acetylglucosamine-6-phosphate deacetylase"/>
    <property type="match status" value="1"/>
</dbReference>
<dbReference type="Gene3D" id="3.20.20.140">
    <property type="entry name" value="Metal-dependent hydrolases"/>
    <property type="match status" value="1"/>
</dbReference>
<dbReference type="Gene3D" id="2.30.40.10">
    <property type="entry name" value="Urease, subunit C, domain 1"/>
    <property type="match status" value="1"/>
</dbReference>
<dbReference type="InterPro" id="IPR006680">
    <property type="entry name" value="Amidohydro-rel"/>
</dbReference>
<dbReference type="InterPro" id="IPR003764">
    <property type="entry name" value="GlcNAc_6-P_deAcase"/>
</dbReference>
<dbReference type="InterPro" id="IPR011059">
    <property type="entry name" value="Metal-dep_hydrolase_composite"/>
</dbReference>
<dbReference type="InterPro" id="IPR032466">
    <property type="entry name" value="Metal_Hydrolase"/>
</dbReference>
<dbReference type="NCBIfam" id="TIGR00221">
    <property type="entry name" value="nagA"/>
    <property type="match status" value="1"/>
</dbReference>
<dbReference type="PANTHER" id="PTHR11113">
    <property type="entry name" value="N-ACETYLGLUCOSAMINE-6-PHOSPHATE DEACETYLASE"/>
    <property type="match status" value="1"/>
</dbReference>
<dbReference type="PANTHER" id="PTHR11113:SF14">
    <property type="entry name" value="N-ACETYLGLUCOSAMINE-6-PHOSPHATE DEACETYLASE"/>
    <property type="match status" value="1"/>
</dbReference>
<dbReference type="Pfam" id="PF01979">
    <property type="entry name" value="Amidohydro_1"/>
    <property type="match status" value="1"/>
</dbReference>
<dbReference type="PIRSF" id="PIRSF038994">
    <property type="entry name" value="NagA"/>
    <property type="match status" value="1"/>
</dbReference>
<dbReference type="SUPFAM" id="SSF51338">
    <property type="entry name" value="Composite domain of metallo-dependent hydrolases"/>
    <property type="match status" value="1"/>
</dbReference>
<dbReference type="SUPFAM" id="SSF51556">
    <property type="entry name" value="Metallo-dependent hydrolases"/>
    <property type="match status" value="1"/>
</dbReference>
<protein>
    <recommendedName>
        <fullName evidence="3">N-acetylgalactosamine-6-phosphate deacetylase</fullName>
        <shortName evidence="3">GalNAc-6-P deacetylase</shortName>
        <ecNumber evidence="2">3.5.1.-</ecNumber>
    </recommendedName>
    <alternativeName>
        <fullName evidence="3">N-acetylglucosamine-6-phosphate deacetylase</fullName>
        <shortName evidence="4">GlcNAc-6-P deacetylase</shortName>
        <ecNumber evidence="2">3.5.1.25</ecNumber>
    </alternativeName>
</protein>
<comment type="function">
    <text evidence="2">Involved in the pathway of N-acetyl-D-galactosamine degradation. Catalyzes the conversion of N-acetyl-D-galactosamine 6-phosphate to D-galactosamine 6-phosphate and acetate. It can also catalyze the conversion of N-acetyl-D-glucosamine 6-phosphate.</text>
</comment>
<comment type="catalytic activity">
    <reaction evidence="2">
        <text>N-acetyl-D-galactosamine 6-phosphate + H2O = D-galactosamine 6-phosphate + acetate</text>
        <dbReference type="Rhea" id="RHEA:18149"/>
        <dbReference type="ChEBI" id="CHEBI:15377"/>
        <dbReference type="ChEBI" id="CHEBI:30089"/>
        <dbReference type="ChEBI" id="CHEBI:71673"/>
        <dbReference type="ChEBI" id="CHEBI:71674"/>
    </reaction>
</comment>
<comment type="catalytic activity">
    <reaction evidence="2">
        <text>N-acetyl-D-glucosamine 6-phosphate + H2O = D-glucosamine 6-phosphate + acetate</text>
        <dbReference type="Rhea" id="RHEA:22936"/>
        <dbReference type="ChEBI" id="CHEBI:15377"/>
        <dbReference type="ChEBI" id="CHEBI:30089"/>
        <dbReference type="ChEBI" id="CHEBI:57513"/>
        <dbReference type="ChEBI" id="CHEBI:58725"/>
        <dbReference type="EC" id="3.5.1.25"/>
    </reaction>
</comment>
<comment type="subcellular location">
    <subcellularLocation>
        <location evidence="4">Cytoplasm</location>
    </subcellularLocation>
</comment>
<comment type="miscellaneous">
    <text evidence="4">In Shewanella sp., the active phosphotransferase system (PTS) specific for the transport of GalNAc and GalN is replaced by a set of GalNAc- and GalN-specific permeases and kinases (AgaP and AgaK, respectively).</text>
</comment>
<comment type="similarity">
    <text>Belongs to the metallo-dependent hydrolases superfamily. NagA family.</text>
</comment>
<proteinExistence type="evidence at protein level"/>
<evidence type="ECO:0000250" key="1">
    <source>
        <dbReference type="UniProtKB" id="P0AF18"/>
    </source>
</evidence>
<evidence type="ECO:0000269" key="2">
    <source>
    </source>
</evidence>
<evidence type="ECO:0000303" key="3">
    <source>
    </source>
</evidence>
<evidence type="ECO:0000305" key="4">
    <source>
    </source>
</evidence>
<organism>
    <name type="scientific">Shewanella sp. (strain ANA-3)</name>
    <dbReference type="NCBI Taxonomy" id="94122"/>
    <lineage>
        <taxon>Bacteria</taxon>
        <taxon>Pseudomonadati</taxon>
        <taxon>Pseudomonadota</taxon>
        <taxon>Gammaproteobacteria</taxon>
        <taxon>Alteromonadales</taxon>
        <taxon>Shewanellaceae</taxon>
        <taxon>Shewanella</taxon>
    </lineage>
</organism>